<comment type="function">
    <text evidence="1">Binds directly to 23S rRNA. The L1 stalk is quite mobile in the ribosome, and is involved in E site tRNA release.</text>
</comment>
<comment type="function">
    <text evidence="1">Protein L1 is also a translational repressor protein, it controls the translation of the L11 operon by binding to its mRNA.</text>
</comment>
<comment type="subunit">
    <text evidence="1">Part of the 50S ribosomal subunit.</text>
</comment>
<comment type="similarity">
    <text evidence="1">Belongs to the universal ribosomal protein uL1 family.</text>
</comment>
<keyword id="KW-1185">Reference proteome</keyword>
<keyword id="KW-0678">Repressor</keyword>
<keyword id="KW-0687">Ribonucleoprotein</keyword>
<keyword id="KW-0689">Ribosomal protein</keyword>
<keyword id="KW-0694">RNA-binding</keyword>
<keyword id="KW-0699">rRNA-binding</keyword>
<keyword id="KW-0810">Translation regulation</keyword>
<keyword id="KW-0820">tRNA-binding</keyword>
<feature type="chain" id="PRO_1000073221" description="Large ribosomal subunit protein uL1">
    <location>
        <begin position="1"/>
        <end position="233"/>
    </location>
</feature>
<proteinExistence type="inferred from homology"/>
<evidence type="ECO:0000255" key="1">
    <source>
        <dbReference type="HAMAP-Rule" id="MF_01318"/>
    </source>
</evidence>
<evidence type="ECO:0000305" key="2"/>
<sequence>MAKAGKRIEKAREGIDRKKTYGLDEAVKMVKDRASVKFDETIEVAIALGVDPRHADQMVRGVVALPSGSGRTVRVAVFAKGDKADQARAAGADIVGDDDLAEIVQSGKIDFDRCIATPDMMPLVGRLGKVLGPRGLMPNPKVGTVTPDVAEAVKAAKGGAVEFRVEKAGIIHAGVGKASFSEDQILVNIRALIDAVQKAKPTGAKGTYIKRIAISSTMGPGVKVEPQSVAASA</sequence>
<reference key="1">
    <citation type="journal article" date="2011" name="Stand. Genomic Sci.">
        <title>Complete genome sequence of Parvibaculum lavamentivorans type strain (DS-1(T)).</title>
        <authorList>
            <person name="Schleheck D."/>
            <person name="Weiss M."/>
            <person name="Pitluck S."/>
            <person name="Bruce D."/>
            <person name="Land M.L."/>
            <person name="Han S."/>
            <person name="Saunders E."/>
            <person name="Tapia R."/>
            <person name="Detter C."/>
            <person name="Brettin T."/>
            <person name="Han J."/>
            <person name="Woyke T."/>
            <person name="Goodwin L."/>
            <person name="Pennacchio L."/>
            <person name="Nolan M."/>
            <person name="Cook A.M."/>
            <person name="Kjelleberg S."/>
            <person name="Thomas T."/>
        </authorList>
    </citation>
    <scope>NUCLEOTIDE SEQUENCE [LARGE SCALE GENOMIC DNA]</scope>
    <source>
        <strain>DS-1 / DSM 13023 / NCIMB 13966</strain>
    </source>
</reference>
<name>RL1_PARL1</name>
<protein>
    <recommendedName>
        <fullName evidence="1">Large ribosomal subunit protein uL1</fullName>
    </recommendedName>
    <alternativeName>
        <fullName evidence="2">50S ribosomal protein L1</fullName>
    </alternativeName>
</protein>
<gene>
    <name evidence="1" type="primary">rplA</name>
    <name type="ordered locus">Plav_2726</name>
</gene>
<accession>A7HWQ1</accession>
<organism>
    <name type="scientific">Parvibaculum lavamentivorans (strain DS-1 / DSM 13023 / NCIMB 13966)</name>
    <dbReference type="NCBI Taxonomy" id="402881"/>
    <lineage>
        <taxon>Bacteria</taxon>
        <taxon>Pseudomonadati</taxon>
        <taxon>Pseudomonadota</taxon>
        <taxon>Alphaproteobacteria</taxon>
        <taxon>Hyphomicrobiales</taxon>
        <taxon>Parvibaculaceae</taxon>
        <taxon>Parvibaculum</taxon>
    </lineage>
</organism>
<dbReference type="EMBL" id="CP000774">
    <property type="protein sequence ID" value="ABS64334.1"/>
    <property type="molecule type" value="Genomic_DNA"/>
</dbReference>
<dbReference type="RefSeq" id="WP_012111649.1">
    <property type="nucleotide sequence ID" value="NC_009719.1"/>
</dbReference>
<dbReference type="SMR" id="A7HWQ1"/>
<dbReference type="STRING" id="402881.Plav_2726"/>
<dbReference type="KEGG" id="pla:Plav_2726"/>
<dbReference type="eggNOG" id="COG0081">
    <property type="taxonomic scope" value="Bacteria"/>
</dbReference>
<dbReference type="HOGENOM" id="CLU_062853_0_0_5"/>
<dbReference type="OrthoDB" id="9803740at2"/>
<dbReference type="Proteomes" id="UP000006377">
    <property type="component" value="Chromosome"/>
</dbReference>
<dbReference type="GO" id="GO:0022625">
    <property type="term" value="C:cytosolic large ribosomal subunit"/>
    <property type="evidence" value="ECO:0007669"/>
    <property type="project" value="TreeGrafter"/>
</dbReference>
<dbReference type="GO" id="GO:0019843">
    <property type="term" value="F:rRNA binding"/>
    <property type="evidence" value="ECO:0007669"/>
    <property type="project" value="UniProtKB-UniRule"/>
</dbReference>
<dbReference type="GO" id="GO:0003735">
    <property type="term" value="F:structural constituent of ribosome"/>
    <property type="evidence" value="ECO:0007669"/>
    <property type="project" value="InterPro"/>
</dbReference>
<dbReference type="GO" id="GO:0000049">
    <property type="term" value="F:tRNA binding"/>
    <property type="evidence" value="ECO:0007669"/>
    <property type="project" value="UniProtKB-KW"/>
</dbReference>
<dbReference type="GO" id="GO:0006417">
    <property type="term" value="P:regulation of translation"/>
    <property type="evidence" value="ECO:0007669"/>
    <property type="project" value="UniProtKB-KW"/>
</dbReference>
<dbReference type="GO" id="GO:0006412">
    <property type="term" value="P:translation"/>
    <property type="evidence" value="ECO:0007669"/>
    <property type="project" value="UniProtKB-UniRule"/>
</dbReference>
<dbReference type="CDD" id="cd00403">
    <property type="entry name" value="Ribosomal_L1"/>
    <property type="match status" value="1"/>
</dbReference>
<dbReference type="FunFam" id="3.40.50.790:FF:000001">
    <property type="entry name" value="50S ribosomal protein L1"/>
    <property type="match status" value="1"/>
</dbReference>
<dbReference type="Gene3D" id="3.30.190.20">
    <property type="match status" value="1"/>
</dbReference>
<dbReference type="Gene3D" id="3.40.50.790">
    <property type="match status" value="1"/>
</dbReference>
<dbReference type="HAMAP" id="MF_01318_B">
    <property type="entry name" value="Ribosomal_uL1_B"/>
    <property type="match status" value="1"/>
</dbReference>
<dbReference type="InterPro" id="IPR005878">
    <property type="entry name" value="Ribosom_uL1_bac-type"/>
</dbReference>
<dbReference type="InterPro" id="IPR002143">
    <property type="entry name" value="Ribosomal_uL1"/>
</dbReference>
<dbReference type="InterPro" id="IPR023674">
    <property type="entry name" value="Ribosomal_uL1-like"/>
</dbReference>
<dbReference type="InterPro" id="IPR028364">
    <property type="entry name" value="Ribosomal_uL1/biogenesis"/>
</dbReference>
<dbReference type="InterPro" id="IPR016095">
    <property type="entry name" value="Ribosomal_uL1_3-a/b-sand"/>
</dbReference>
<dbReference type="InterPro" id="IPR023673">
    <property type="entry name" value="Ribosomal_uL1_CS"/>
</dbReference>
<dbReference type="NCBIfam" id="TIGR01169">
    <property type="entry name" value="rplA_bact"/>
    <property type="match status" value="1"/>
</dbReference>
<dbReference type="PANTHER" id="PTHR36427">
    <property type="entry name" value="54S RIBOSOMAL PROTEIN L1, MITOCHONDRIAL"/>
    <property type="match status" value="1"/>
</dbReference>
<dbReference type="PANTHER" id="PTHR36427:SF3">
    <property type="entry name" value="LARGE RIBOSOMAL SUBUNIT PROTEIN UL1M"/>
    <property type="match status" value="1"/>
</dbReference>
<dbReference type="Pfam" id="PF00687">
    <property type="entry name" value="Ribosomal_L1"/>
    <property type="match status" value="1"/>
</dbReference>
<dbReference type="PIRSF" id="PIRSF002155">
    <property type="entry name" value="Ribosomal_L1"/>
    <property type="match status" value="1"/>
</dbReference>
<dbReference type="SUPFAM" id="SSF56808">
    <property type="entry name" value="Ribosomal protein L1"/>
    <property type="match status" value="1"/>
</dbReference>
<dbReference type="PROSITE" id="PS01199">
    <property type="entry name" value="RIBOSOMAL_L1"/>
    <property type="match status" value="1"/>
</dbReference>